<feature type="chain" id="PRO_0000104585" description="Large ribosomal subunit protein uL30">
    <location>
        <begin position="1"/>
        <end position="59"/>
    </location>
</feature>
<evidence type="ECO:0000255" key="1">
    <source>
        <dbReference type="HAMAP-Rule" id="MF_01371"/>
    </source>
</evidence>
<evidence type="ECO:0000305" key="2"/>
<protein>
    <recommendedName>
        <fullName evidence="1">Large ribosomal subunit protein uL30</fullName>
    </recommendedName>
    <alternativeName>
        <fullName evidence="2">50S ribosomal protein L30</fullName>
    </alternativeName>
</protein>
<proteinExistence type="inferred from homology"/>
<gene>
    <name evidence="1" type="primary">rpmD</name>
    <name type="ordered locus">BU506</name>
</gene>
<organism>
    <name type="scientific">Buchnera aphidicola subsp. Acyrthosiphon pisum (strain APS)</name>
    <name type="common">Acyrthosiphon pisum symbiotic bacterium</name>
    <dbReference type="NCBI Taxonomy" id="107806"/>
    <lineage>
        <taxon>Bacteria</taxon>
        <taxon>Pseudomonadati</taxon>
        <taxon>Pseudomonadota</taxon>
        <taxon>Gammaproteobacteria</taxon>
        <taxon>Enterobacterales</taxon>
        <taxon>Erwiniaceae</taxon>
        <taxon>Buchnera</taxon>
    </lineage>
</organism>
<comment type="subunit">
    <text evidence="1">Part of the 50S ribosomal subunit.</text>
</comment>
<comment type="similarity">
    <text evidence="1">Belongs to the universal ribosomal protein uL30 family.</text>
</comment>
<sequence>MKNIKITQIKSAIGRLPKHKKTLIGLGLRYIGHTVIREDTPSIQGMVKKISYILKIQEE</sequence>
<dbReference type="EMBL" id="BA000003">
    <property type="protein sequence ID" value="BAB13199.1"/>
    <property type="molecule type" value="Genomic_DNA"/>
</dbReference>
<dbReference type="RefSeq" id="NP_240313.1">
    <property type="nucleotide sequence ID" value="NC_002528.1"/>
</dbReference>
<dbReference type="RefSeq" id="WP_009874457.1">
    <property type="nucleotide sequence ID" value="NZ_AP036055.1"/>
</dbReference>
<dbReference type="SMR" id="P57573"/>
<dbReference type="STRING" id="563178.BUAP5A_499"/>
<dbReference type="EnsemblBacteria" id="BAB13199">
    <property type="protein sequence ID" value="BAB13199"/>
    <property type="gene ID" value="BAB13199"/>
</dbReference>
<dbReference type="KEGG" id="buc:BU506"/>
<dbReference type="PATRIC" id="fig|107806.10.peg.511"/>
<dbReference type="eggNOG" id="COG1841">
    <property type="taxonomic scope" value="Bacteria"/>
</dbReference>
<dbReference type="HOGENOM" id="CLU_131047_1_4_6"/>
<dbReference type="Proteomes" id="UP000001806">
    <property type="component" value="Chromosome"/>
</dbReference>
<dbReference type="GO" id="GO:0022625">
    <property type="term" value="C:cytosolic large ribosomal subunit"/>
    <property type="evidence" value="ECO:0007669"/>
    <property type="project" value="TreeGrafter"/>
</dbReference>
<dbReference type="GO" id="GO:0003735">
    <property type="term" value="F:structural constituent of ribosome"/>
    <property type="evidence" value="ECO:0007669"/>
    <property type="project" value="InterPro"/>
</dbReference>
<dbReference type="GO" id="GO:0006412">
    <property type="term" value="P:translation"/>
    <property type="evidence" value="ECO:0007669"/>
    <property type="project" value="UniProtKB-UniRule"/>
</dbReference>
<dbReference type="CDD" id="cd01658">
    <property type="entry name" value="Ribosomal_L30"/>
    <property type="match status" value="1"/>
</dbReference>
<dbReference type="FunFam" id="3.30.1390.20:FF:000001">
    <property type="entry name" value="50S ribosomal protein L30"/>
    <property type="match status" value="1"/>
</dbReference>
<dbReference type="Gene3D" id="3.30.1390.20">
    <property type="entry name" value="Ribosomal protein L30, ferredoxin-like fold domain"/>
    <property type="match status" value="1"/>
</dbReference>
<dbReference type="HAMAP" id="MF_01371_B">
    <property type="entry name" value="Ribosomal_uL30_B"/>
    <property type="match status" value="1"/>
</dbReference>
<dbReference type="InterPro" id="IPR036919">
    <property type="entry name" value="Ribo_uL30_ferredoxin-like_sf"/>
</dbReference>
<dbReference type="InterPro" id="IPR005996">
    <property type="entry name" value="Ribosomal_uL30_bac-type"/>
</dbReference>
<dbReference type="InterPro" id="IPR016082">
    <property type="entry name" value="Ribosomal_uL30_ferredoxin-like"/>
</dbReference>
<dbReference type="NCBIfam" id="TIGR01308">
    <property type="entry name" value="rpmD_bact"/>
    <property type="match status" value="1"/>
</dbReference>
<dbReference type="PANTHER" id="PTHR15892:SF2">
    <property type="entry name" value="LARGE RIBOSOMAL SUBUNIT PROTEIN UL30M"/>
    <property type="match status" value="1"/>
</dbReference>
<dbReference type="PANTHER" id="PTHR15892">
    <property type="entry name" value="MITOCHONDRIAL RIBOSOMAL PROTEIN L30"/>
    <property type="match status" value="1"/>
</dbReference>
<dbReference type="Pfam" id="PF00327">
    <property type="entry name" value="Ribosomal_L30"/>
    <property type="match status" value="1"/>
</dbReference>
<dbReference type="PIRSF" id="PIRSF002211">
    <property type="entry name" value="Ribosomal_L30_bac-type"/>
    <property type="match status" value="1"/>
</dbReference>
<dbReference type="SUPFAM" id="SSF55129">
    <property type="entry name" value="Ribosomal protein L30p/L7e"/>
    <property type="match status" value="1"/>
</dbReference>
<accession>P57573</accession>
<reference key="1">
    <citation type="journal article" date="2000" name="Nature">
        <title>Genome sequence of the endocellular bacterial symbiont of aphids Buchnera sp. APS.</title>
        <authorList>
            <person name="Shigenobu S."/>
            <person name="Watanabe H."/>
            <person name="Hattori M."/>
            <person name="Sakaki Y."/>
            <person name="Ishikawa H."/>
        </authorList>
    </citation>
    <scope>NUCLEOTIDE SEQUENCE [LARGE SCALE GENOMIC DNA]</scope>
    <source>
        <strain>APS</strain>
    </source>
</reference>
<keyword id="KW-1185">Reference proteome</keyword>
<keyword id="KW-0687">Ribonucleoprotein</keyword>
<keyword id="KW-0689">Ribosomal protein</keyword>
<name>RL30_BUCAI</name>